<gene>
    <name evidence="1" type="primary">obg</name>
    <name type="ordered locus">PCC_0681</name>
</gene>
<proteinExistence type="inferred from homology"/>
<protein>
    <recommendedName>
        <fullName evidence="3">Putative GTPase Obg</fullName>
        <ecNumber evidence="1">3.6.5.-</ecNumber>
    </recommendedName>
    <alternativeName>
        <fullName evidence="1">GTP-binding protein Obg</fullName>
    </alternativeName>
</protein>
<dbReference type="EC" id="3.6.5.-" evidence="1"/>
<dbReference type="EMBL" id="CP000815">
    <property type="protein sequence ID" value="ACB43099.1"/>
    <property type="molecule type" value="Genomic_DNA"/>
</dbReference>
<dbReference type="RefSeq" id="YP_002049309.1">
    <property type="nucleotide sequence ID" value="NC_011087.1"/>
</dbReference>
<dbReference type="SMR" id="B1X580"/>
<dbReference type="GeneID" id="6481995"/>
<dbReference type="GO" id="GO:0070111">
    <property type="term" value="C:organellar chromatophore"/>
    <property type="evidence" value="ECO:0007669"/>
    <property type="project" value="UniProtKB-SubCell"/>
</dbReference>
<dbReference type="GO" id="GO:0009536">
    <property type="term" value="C:plastid"/>
    <property type="evidence" value="ECO:0007669"/>
    <property type="project" value="UniProtKB-KW"/>
</dbReference>
<dbReference type="GO" id="GO:0005525">
    <property type="term" value="F:GTP binding"/>
    <property type="evidence" value="ECO:0007669"/>
    <property type="project" value="UniProtKB-KW"/>
</dbReference>
<dbReference type="GO" id="GO:0003924">
    <property type="term" value="F:GTPase activity"/>
    <property type="evidence" value="ECO:0007669"/>
    <property type="project" value="InterPro"/>
</dbReference>
<dbReference type="GO" id="GO:0000287">
    <property type="term" value="F:magnesium ion binding"/>
    <property type="evidence" value="ECO:0007669"/>
    <property type="project" value="InterPro"/>
</dbReference>
<dbReference type="CDD" id="cd01898">
    <property type="entry name" value="Obg"/>
    <property type="match status" value="1"/>
</dbReference>
<dbReference type="FunFam" id="2.70.210.12:FF:000001">
    <property type="entry name" value="GTPase Obg"/>
    <property type="match status" value="1"/>
</dbReference>
<dbReference type="Gene3D" id="2.70.210.12">
    <property type="entry name" value="GTP1/OBG domain"/>
    <property type="match status" value="1"/>
</dbReference>
<dbReference type="Gene3D" id="3.40.50.300">
    <property type="entry name" value="P-loop containing nucleotide triphosphate hydrolases"/>
    <property type="match status" value="1"/>
</dbReference>
<dbReference type="HAMAP" id="MF_01454">
    <property type="entry name" value="GTPase_Obg"/>
    <property type="match status" value="1"/>
</dbReference>
<dbReference type="InterPro" id="IPR031167">
    <property type="entry name" value="G_OBG"/>
</dbReference>
<dbReference type="InterPro" id="IPR006073">
    <property type="entry name" value="GTP-bd"/>
</dbReference>
<dbReference type="InterPro" id="IPR014100">
    <property type="entry name" value="GTP-bd_Obg/CgtA"/>
</dbReference>
<dbReference type="InterPro" id="IPR006169">
    <property type="entry name" value="GTP1_OBG_dom"/>
</dbReference>
<dbReference type="InterPro" id="IPR036726">
    <property type="entry name" value="GTP1_OBG_dom_sf"/>
</dbReference>
<dbReference type="InterPro" id="IPR045086">
    <property type="entry name" value="OBG_GTPase"/>
</dbReference>
<dbReference type="InterPro" id="IPR027417">
    <property type="entry name" value="P-loop_NTPase"/>
</dbReference>
<dbReference type="NCBIfam" id="TIGR02729">
    <property type="entry name" value="Obg_CgtA"/>
    <property type="match status" value="1"/>
</dbReference>
<dbReference type="NCBIfam" id="NF008955">
    <property type="entry name" value="PRK12297.1"/>
    <property type="match status" value="1"/>
</dbReference>
<dbReference type="NCBIfam" id="NF008956">
    <property type="entry name" value="PRK12299.1"/>
    <property type="match status" value="1"/>
</dbReference>
<dbReference type="PANTHER" id="PTHR11702">
    <property type="entry name" value="DEVELOPMENTALLY REGULATED GTP-BINDING PROTEIN-RELATED"/>
    <property type="match status" value="1"/>
</dbReference>
<dbReference type="PANTHER" id="PTHR11702:SF31">
    <property type="entry name" value="MITOCHONDRIAL RIBOSOME-ASSOCIATED GTPASE 2"/>
    <property type="match status" value="1"/>
</dbReference>
<dbReference type="Pfam" id="PF01018">
    <property type="entry name" value="GTP1_OBG"/>
    <property type="match status" value="1"/>
</dbReference>
<dbReference type="Pfam" id="PF01926">
    <property type="entry name" value="MMR_HSR1"/>
    <property type="match status" value="1"/>
</dbReference>
<dbReference type="PIRSF" id="PIRSF002401">
    <property type="entry name" value="GTP_bd_Obg/CgtA"/>
    <property type="match status" value="1"/>
</dbReference>
<dbReference type="PRINTS" id="PR00326">
    <property type="entry name" value="GTP1OBG"/>
</dbReference>
<dbReference type="SUPFAM" id="SSF82051">
    <property type="entry name" value="Obg GTP-binding protein N-terminal domain"/>
    <property type="match status" value="1"/>
</dbReference>
<dbReference type="SUPFAM" id="SSF52540">
    <property type="entry name" value="P-loop containing nucleoside triphosphate hydrolases"/>
    <property type="match status" value="1"/>
</dbReference>
<dbReference type="PROSITE" id="PS51710">
    <property type="entry name" value="G_OBG"/>
    <property type="match status" value="1"/>
</dbReference>
<dbReference type="PROSITE" id="PS51883">
    <property type="entry name" value="OBG"/>
    <property type="match status" value="1"/>
</dbReference>
<reference key="1">
    <citation type="journal article" date="2008" name="Curr. Biol.">
        <title>Chromatophore genome sequence of Paulinella sheds light on acquisition of photosynthesis by eukaryotes.</title>
        <authorList>
            <person name="Nowack E.C.M."/>
            <person name="Melkonian M."/>
            <person name="Gloeckner G."/>
        </authorList>
    </citation>
    <scope>NUCLEOTIDE SEQUENCE [LARGE SCALE GENOMIC DNA]</scope>
</reference>
<accession>B1X580</accession>
<comment type="function">
    <text evidence="1">An essential GTPase which binds GTP, GDP and possibly (p)ppGpp with moderate affinity, with high nucleotide exchange rates and a fairly low GTP hydrolysis rate.</text>
</comment>
<comment type="cofactor">
    <cofactor evidence="1">
        <name>Mg(2+)</name>
        <dbReference type="ChEBI" id="CHEBI:18420"/>
    </cofactor>
</comment>
<comment type="subunit">
    <text evidence="1">Monomer.</text>
</comment>
<comment type="subcellular location">
    <subcellularLocation>
        <location>Plastid</location>
        <location>Organellar chromatophore</location>
    </subcellularLocation>
</comment>
<comment type="similarity">
    <text evidence="1">Belongs to the TRAFAC class OBG-HflX-like GTPase superfamily. OBG GTPase family.</text>
</comment>
<evidence type="ECO:0000250" key="1">
    <source>
        <dbReference type="UniProtKB" id="P42641"/>
    </source>
</evidence>
<evidence type="ECO:0000255" key="2">
    <source>
        <dbReference type="PROSITE-ProRule" id="PRU01231"/>
    </source>
</evidence>
<evidence type="ECO:0000305" key="3"/>
<organism>
    <name type="scientific">Paulinella chromatophora</name>
    <dbReference type="NCBI Taxonomy" id="39717"/>
    <lineage>
        <taxon>Eukaryota</taxon>
        <taxon>Sar</taxon>
        <taxon>Rhizaria</taxon>
        <taxon>Cercozoa</taxon>
        <taxon>Imbricatea</taxon>
        <taxon>Silicofilosea</taxon>
        <taxon>Euglyphida</taxon>
        <taxon>Paulinellidae</taxon>
        <taxon>Paulinella</taxon>
    </lineage>
</organism>
<name>OBG_PAUCH</name>
<geneLocation type="organellar chromatophore"/>
<keyword id="KW-0342">GTP-binding</keyword>
<keyword id="KW-0378">Hydrolase</keyword>
<keyword id="KW-0460">Magnesium</keyword>
<keyword id="KW-0479">Metal-binding</keyword>
<keyword id="KW-0547">Nucleotide-binding</keyword>
<keyword id="KW-0994">Organellar chromatophore</keyword>
<keyword id="KW-0934">Plastid</keyword>
<sequence length="329" mass="35359">MQFIDQARIMVYAGRGGDGIVAFRREKYVPAGGPSGGDGGRGGNVIFEADSNLQTLLDFKYKRIFYAEDGNRGGPNRCSGVSGSNLVIKVPCGTEVRHLGSGILLGDLTEPSQQLMIAFGGRGGLGNAHYLSNRNRVPEKFTLGREGEEWPLQLELKLLAEVGIIGLPNAGKSTLIGNLSAAKPKIADYPFTTLIPNLGAVYRPNGDSIIFADIPGLILGAANGAGLGYDFLRHIERTRLLVHLIDSSAKDLVHDLIVVEGELIAYGHGLADRPRIVVLSKIELLSGEELHQFSQALRMVSGCKILVISSAILSSIEFLKTQIWQQLGT</sequence>
<feature type="chain" id="PRO_0000386417" description="Putative GTPase Obg">
    <location>
        <begin position="1"/>
        <end position="329"/>
    </location>
</feature>
<feature type="domain" description="Obg" evidence="2">
    <location>
        <begin position="1"/>
        <end position="159"/>
    </location>
</feature>
<feature type="domain" description="OBG-type G" evidence="1">
    <location>
        <begin position="160"/>
        <end position="328"/>
    </location>
</feature>
<feature type="binding site" evidence="1">
    <location>
        <begin position="166"/>
        <end position="173"/>
    </location>
    <ligand>
        <name>GTP</name>
        <dbReference type="ChEBI" id="CHEBI:37565"/>
    </ligand>
</feature>
<feature type="binding site" evidence="1">
    <location>
        <position position="173"/>
    </location>
    <ligand>
        <name>Mg(2+)</name>
        <dbReference type="ChEBI" id="CHEBI:18420"/>
    </ligand>
</feature>
<feature type="binding site" evidence="1">
    <location>
        <begin position="191"/>
        <end position="195"/>
    </location>
    <ligand>
        <name>GTP</name>
        <dbReference type="ChEBI" id="CHEBI:37565"/>
    </ligand>
</feature>
<feature type="binding site" evidence="1">
    <location>
        <position position="193"/>
    </location>
    <ligand>
        <name>Mg(2+)</name>
        <dbReference type="ChEBI" id="CHEBI:18420"/>
    </ligand>
</feature>
<feature type="binding site" evidence="1">
    <location>
        <begin position="213"/>
        <end position="216"/>
    </location>
    <ligand>
        <name>GTP</name>
        <dbReference type="ChEBI" id="CHEBI:37565"/>
    </ligand>
</feature>
<feature type="binding site" evidence="1">
    <location>
        <begin position="280"/>
        <end position="283"/>
    </location>
    <ligand>
        <name>GTP</name>
        <dbReference type="ChEBI" id="CHEBI:37565"/>
    </ligand>
</feature>
<feature type="binding site" evidence="1">
    <location>
        <begin position="309"/>
        <end position="311"/>
    </location>
    <ligand>
        <name>GTP</name>
        <dbReference type="ChEBI" id="CHEBI:37565"/>
    </ligand>
</feature>